<comment type="subcellular location">
    <subcellularLocation>
        <location evidence="2">Membrane</location>
        <topology evidence="2">Single-pass membrane protein</topology>
    </subcellularLocation>
</comment>
<reference key="1">
    <citation type="journal article" date="2001" name="Nature">
        <title>Genome sequence of enterohaemorrhagic Escherichia coli O157:H7.</title>
        <authorList>
            <person name="Perna N.T."/>
            <person name="Plunkett G. III"/>
            <person name="Burland V."/>
            <person name="Mau B."/>
            <person name="Glasner J.D."/>
            <person name="Rose D.J."/>
            <person name="Mayhew G.F."/>
            <person name="Evans P.S."/>
            <person name="Gregor J."/>
            <person name="Kirkpatrick H.A."/>
            <person name="Posfai G."/>
            <person name="Hackett J."/>
            <person name="Klink S."/>
            <person name="Boutin A."/>
            <person name="Shao Y."/>
            <person name="Miller L."/>
            <person name="Grotbeck E.J."/>
            <person name="Davis N.W."/>
            <person name="Lim A."/>
            <person name="Dimalanta E.T."/>
            <person name="Potamousis K."/>
            <person name="Apodaca J."/>
            <person name="Anantharaman T.S."/>
            <person name="Lin J."/>
            <person name="Yen G."/>
            <person name="Schwartz D.C."/>
            <person name="Welch R.A."/>
            <person name="Blattner F.R."/>
        </authorList>
    </citation>
    <scope>NUCLEOTIDE SEQUENCE [LARGE SCALE GENOMIC DNA]</scope>
    <source>
        <strain>O157:H7 / EDL933 / ATCC 700927 / EHEC</strain>
    </source>
</reference>
<reference key="2">
    <citation type="journal article" date="2001" name="DNA Res.">
        <title>Complete genome sequence of enterohemorrhagic Escherichia coli O157:H7 and genomic comparison with a laboratory strain K-12.</title>
        <authorList>
            <person name="Hayashi T."/>
            <person name="Makino K."/>
            <person name="Ohnishi M."/>
            <person name="Kurokawa K."/>
            <person name="Ishii K."/>
            <person name="Yokoyama K."/>
            <person name="Han C.-G."/>
            <person name="Ohtsubo E."/>
            <person name="Nakayama K."/>
            <person name="Murata T."/>
            <person name="Tanaka M."/>
            <person name="Tobe T."/>
            <person name="Iida T."/>
            <person name="Takami H."/>
            <person name="Honda T."/>
            <person name="Sasakawa C."/>
            <person name="Ogasawara N."/>
            <person name="Yasunaga T."/>
            <person name="Kuhara S."/>
            <person name="Shiba T."/>
            <person name="Hattori M."/>
            <person name="Shinagawa H."/>
        </authorList>
    </citation>
    <scope>NUCLEOTIDE SEQUENCE [LARGE SCALE GENOMIC DNA]</scope>
    <source>
        <strain>O157:H7 / Sakai / RIMD 0509952 / EHEC</strain>
    </source>
</reference>
<organism>
    <name type="scientific">Escherichia coli O157:H7</name>
    <dbReference type="NCBI Taxonomy" id="83334"/>
    <lineage>
        <taxon>Bacteria</taxon>
        <taxon>Pseudomonadati</taxon>
        <taxon>Pseudomonadota</taxon>
        <taxon>Gammaproteobacteria</taxon>
        <taxon>Enterobacterales</taxon>
        <taxon>Enterobacteriaceae</taxon>
        <taxon>Escherichia</taxon>
    </lineage>
</organism>
<proteinExistence type="predicted"/>
<protein>
    <recommendedName>
        <fullName>Uncharacterized protein YeiS</fullName>
    </recommendedName>
</protein>
<name>YEIS_ECO57</name>
<accession>P64538</accession>
<accession>P76439</accession>
<evidence type="ECO:0000255" key="1"/>
<evidence type="ECO:0000305" key="2"/>
<sequence>MDVQQFFVVAVFFLIPIFCFREAWKGWRAGAIDKRVKNAPEPVYVWRAKNPGLFFAYMVAYIGFGILSIGMIVYLIFYR</sequence>
<gene>
    <name type="primary">yeiS</name>
    <name type="ordered locus">Z3400</name>
    <name type="ordered locus">ECs3037</name>
</gene>
<dbReference type="EMBL" id="AE005174">
    <property type="protein sequence ID" value="AAG57283.1"/>
    <property type="molecule type" value="Genomic_DNA"/>
</dbReference>
<dbReference type="EMBL" id="BA000007">
    <property type="protein sequence ID" value="BAB36460.1"/>
    <property type="molecule type" value="Genomic_DNA"/>
</dbReference>
<dbReference type="PIR" id="E91008">
    <property type="entry name" value="E91008"/>
</dbReference>
<dbReference type="PIR" id="G85852">
    <property type="entry name" value="G85852"/>
</dbReference>
<dbReference type="RefSeq" id="NP_311064.1">
    <property type="nucleotide sequence ID" value="NC_002695.1"/>
</dbReference>
<dbReference type="RefSeq" id="WP_000383096.1">
    <property type="nucleotide sequence ID" value="NZ_SWKA01000005.1"/>
</dbReference>
<dbReference type="SMR" id="P64538"/>
<dbReference type="STRING" id="155864.Z3400"/>
<dbReference type="GeneID" id="916741"/>
<dbReference type="KEGG" id="ece:Z3400"/>
<dbReference type="KEGG" id="ecs:ECs_3037"/>
<dbReference type="PATRIC" id="fig|386585.9.peg.3162"/>
<dbReference type="eggNOG" id="ENOG50334PZ">
    <property type="taxonomic scope" value="Bacteria"/>
</dbReference>
<dbReference type="HOGENOM" id="CLU_196596_0_0_6"/>
<dbReference type="OMA" id="HADPIQY"/>
<dbReference type="Proteomes" id="UP000000558">
    <property type="component" value="Chromosome"/>
</dbReference>
<dbReference type="Proteomes" id="UP000002519">
    <property type="component" value="Chromosome"/>
</dbReference>
<dbReference type="GO" id="GO:0016020">
    <property type="term" value="C:membrane"/>
    <property type="evidence" value="ECO:0007669"/>
    <property type="project" value="UniProtKB-SubCell"/>
</dbReference>
<dbReference type="InterPro" id="IPR020155">
    <property type="entry name" value="Uncharacterised_YeiS"/>
</dbReference>
<dbReference type="Pfam" id="PF10808">
    <property type="entry name" value="DUF2542"/>
    <property type="match status" value="1"/>
</dbReference>
<feature type="chain" id="PRO_0000169153" description="Uncharacterized protein YeiS">
    <location>
        <begin position="1"/>
        <end position="79"/>
    </location>
</feature>
<feature type="transmembrane region" description="Helical" evidence="1">
    <location>
        <begin position="53"/>
        <end position="73"/>
    </location>
</feature>
<keyword id="KW-0472">Membrane</keyword>
<keyword id="KW-1185">Reference proteome</keyword>
<keyword id="KW-0812">Transmembrane</keyword>
<keyword id="KW-1133">Transmembrane helix</keyword>